<dbReference type="EMBL" id="CP000115">
    <property type="protein sequence ID" value="ABA04245.1"/>
    <property type="molecule type" value="Genomic_DNA"/>
</dbReference>
<dbReference type="RefSeq" id="WP_011314284.1">
    <property type="nucleotide sequence ID" value="NC_007406.1"/>
</dbReference>
<dbReference type="SMR" id="Q3STZ6"/>
<dbReference type="STRING" id="323098.Nwi_0983"/>
<dbReference type="KEGG" id="nwi:Nwi_0983"/>
<dbReference type="eggNOG" id="COG0257">
    <property type="taxonomic scope" value="Bacteria"/>
</dbReference>
<dbReference type="HOGENOM" id="CLU_135723_3_2_5"/>
<dbReference type="OrthoDB" id="9801558at2"/>
<dbReference type="Proteomes" id="UP000002531">
    <property type="component" value="Chromosome"/>
</dbReference>
<dbReference type="GO" id="GO:1990904">
    <property type="term" value="C:ribonucleoprotein complex"/>
    <property type="evidence" value="ECO:0007669"/>
    <property type="project" value="UniProtKB-KW"/>
</dbReference>
<dbReference type="GO" id="GO:0005840">
    <property type="term" value="C:ribosome"/>
    <property type="evidence" value="ECO:0007669"/>
    <property type="project" value="UniProtKB-KW"/>
</dbReference>
<dbReference type="GO" id="GO:0003735">
    <property type="term" value="F:structural constituent of ribosome"/>
    <property type="evidence" value="ECO:0007669"/>
    <property type="project" value="InterPro"/>
</dbReference>
<dbReference type="GO" id="GO:0006412">
    <property type="term" value="P:translation"/>
    <property type="evidence" value="ECO:0007669"/>
    <property type="project" value="UniProtKB-UniRule"/>
</dbReference>
<dbReference type="HAMAP" id="MF_00251">
    <property type="entry name" value="Ribosomal_bL36"/>
    <property type="match status" value="1"/>
</dbReference>
<dbReference type="InterPro" id="IPR000473">
    <property type="entry name" value="Ribosomal_bL36"/>
</dbReference>
<dbReference type="InterPro" id="IPR035977">
    <property type="entry name" value="Ribosomal_bL36_sp"/>
</dbReference>
<dbReference type="InterPro" id="IPR047621">
    <property type="entry name" value="Ribosomal_L36_bact"/>
</dbReference>
<dbReference type="NCBIfam" id="NF002021">
    <property type="entry name" value="PRK00831.1"/>
    <property type="match status" value="1"/>
</dbReference>
<dbReference type="NCBIfam" id="TIGR01022">
    <property type="entry name" value="rpmJ_bact"/>
    <property type="match status" value="1"/>
</dbReference>
<dbReference type="PANTHER" id="PTHR47781">
    <property type="entry name" value="50S RIBOSOMAL PROTEIN L36 2"/>
    <property type="match status" value="1"/>
</dbReference>
<dbReference type="PANTHER" id="PTHR47781:SF1">
    <property type="entry name" value="LARGE RIBOSOMAL SUBUNIT PROTEIN BL36B"/>
    <property type="match status" value="1"/>
</dbReference>
<dbReference type="Pfam" id="PF00444">
    <property type="entry name" value="Ribosomal_L36"/>
    <property type="match status" value="1"/>
</dbReference>
<dbReference type="SUPFAM" id="SSF57840">
    <property type="entry name" value="Ribosomal protein L36"/>
    <property type="match status" value="1"/>
</dbReference>
<dbReference type="PROSITE" id="PS00828">
    <property type="entry name" value="RIBOSOMAL_L36"/>
    <property type="match status" value="1"/>
</dbReference>
<gene>
    <name evidence="1" type="primary">rpmJ</name>
    <name type="ordered locus">Nwi_0983</name>
</gene>
<proteinExistence type="inferred from homology"/>
<comment type="similarity">
    <text evidence="1">Belongs to the bacterial ribosomal protein bL36 family.</text>
</comment>
<evidence type="ECO:0000255" key="1">
    <source>
        <dbReference type="HAMAP-Rule" id="MF_00251"/>
    </source>
</evidence>
<evidence type="ECO:0000305" key="2"/>
<feature type="chain" id="PRO_0000302254" description="Large ribosomal subunit protein bL36">
    <location>
        <begin position="1"/>
        <end position="41"/>
    </location>
</feature>
<protein>
    <recommendedName>
        <fullName evidence="1">Large ribosomal subunit protein bL36</fullName>
    </recommendedName>
    <alternativeName>
        <fullName evidence="2">50S ribosomal protein L36</fullName>
    </alternativeName>
</protein>
<organism>
    <name type="scientific">Nitrobacter winogradskyi (strain ATCC 25391 / DSM 10237 / CIP 104748 / NCIMB 11846 / Nb-255)</name>
    <dbReference type="NCBI Taxonomy" id="323098"/>
    <lineage>
        <taxon>Bacteria</taxon>
        <taxon>Pseudomonadati</taxon>
        <taxon>Pseudomonadota</taxon>
        <taxon>Alphaproteobacteria</taxon>
        <taxon>Hyphomicrobiales</taxon>
        <taxon>Nitrobacteraceae</taxon>
        <taxon>Nitrobacter</taxon>
    </lineage>
</organism>
<accession>Q3STZ6</accession>
<reference key="1">
    <citation type="journal article" date="2006" name="Appl. Environ. Microbiol.">
        <title>Genome sequence of the chemolithoautotrophic nitrite-oxidizing bacterium Nitrobacter winogradskyi Nb-255.</title>
        <authorList>
            <person name="Starkenburg S.R."/>
            <person name="Chain P.S.G."/>
            <person name="Sayavedra-Soto L.A."/>
            <person name="Hauser L."/>
            <person name="Land M.L."/>
            <person name="Larimer F.W."/>
            <person name="Malfatti S.A."/>
            <person name="Klotz M.G."/>
            <person name="Bottomley P.J."/>
            <person name="Arp D.J."/>
            <person name="Hickey W.J."/>
        </authorList>
    </citation>
    <scope>NUCLEOTIDE SEQUENCE [LARGE SCALE GENOMIC DNA]</scope>
    <source>
        <strain>ATCC 25391 / DSM 10237 / CIP 104748 / NCIMB 11846 / Nb-255</strain>
    </source>
</reference>
<sequence>MKVRNSLKSLRSRHRDNRLVRRKGRVYVINKTQRRFKARQG</sequence>
<keyword id="KW-1185">Reference proteome</keyword>
<keyword id="KW-0687">Ribonucleoprotein</keyword>
<keyword id="KW-0689">Ribosomal protein</keyword>
<name>RL36_NITWN</name>